<name>NCTB_ASPFU</name>
<organism>
    <name type="scientific">Aspergillus fumigatus (strain ATCC MYA-4609 / CBS 101355 / FGSC A1100 / Af293)</name>
    <name type="common">Neosartorya fumigata</name>
    <dbReference type="NCBI Taxonomy" id="330879"/>
    <lineage>
        <taxon>Eukaryota</taxon>
        <taxon>Fungi</taxon>
        <taxon>Dikarya</taxon>
        <taxon>Ascomycota</taxon>
        <taxon>Pezizomycotina</taxon>
        <taxon>Eurotiomycetes</taxon>
        <taxon>Eurotiomycetidae</taxon>
        <taxon>Eurotiales</taxon>
        <taxon>Aspergillaceae</taxon>
        <taxon>Aspergillus</taxon>
        <taxon>Aspergillus subgen. Fumigati</taxon>
    </lineage>
</organism>
<proteinExistence type="evidence at protein level"/>
<reference key="1">
    <citation type="journal article" date="2005" name="Nature">
        <title>Genomic sequence of the pathogenic and allergenic filamentous fungus Aspergillus fumigatus.</title>
        <authorList>
            <person name="Nierman W.C."/>
            <person name="Pain A."/>
            <person name="Anderson M.J."/>
            <person name="Wortman J.R."/>
            <person name="Kim H.S."/>
            <person name="Arroyo J."/>
            <person name="Berriman M."/>
            <person name="Abe K."/>
            <person name="Archer D.B."/>
            <person name="Bermejo C."/>
            <person name="Bennett J.W."/>
            <person name="Bowyer P."/>
            <person name="Chen D."/>
            <person name="Collins M."/>
            <person name="Coulsen R."/>
            <person name="Davies R."/>
            <person name="Dyer P.S."/>
            <person name="Farman M.L."/>
            <person name="Fedorova N."/>
            <person name="Fedorova N.D."/>
            <person name="Feldblyum T.V."/>
            <person name="Fischer R."/>
            <person name="Fosker N."/>
            <person name="Fraser A."/>
            <person name="Garcia J.L."/>
            <person name="Garcia M.J."/>
            <person name="Goble A."/>
            <person name="Goldman G.H."/>
            <person name="Gomi K."/>
            <person name="Griffith-Jones S."/>
            <person name="Gwilliam R."/>
            <person name="Haas B.J."/>
            <person name="Haas H."/>
            <person name="Harris D.E."/>
            <person name="Horiuchi H."/>
            <person name="Huang J."/>
            <person name="Humphray S."/>
            <person name="Jimenez J."/>
            <person name="Keller N."/>
            <person name="Khouri H."/>
            <person name="Kitamoto K."/>
            <person name="Kobayashi T."/>
            <person name="Konzack S."/>
            <person name="Kulkarni R."/>
            <person name="Kumagai T."/>
            <person name="Lafton A."/>
            <person name="Latge J.-P."/>
            <person name="Li W."/>
            <person name="Lord A."/>
            <person name="Lu C."/>
            <person name="Majoros W.H."/>
            <person name="May G.S."/>
            <person name="Miller B.L."/>
            <person name="Mohamoud Y."/>
            <person name="Molina M."/>
            <person name="Monod M."/>
            <person name="Mouyna I."/>
            <person name="Mulligan S."/>
            <person name="Murphy L.D."/>
            <person name="O'Neil S."/>
            <person name="Paulsen I."/>
            <person name="Penalva M.A."/>
            <person name="Pertea M."/>
            <person name="Price C."/>
            <person name="Pritchard B.L."/>
            <person name="Quail M.A."/>
            <person name="Rabbinowitsch E."/>
            <person name="Rawlins N."/>
            <person name="Rajandream M.A."/>
            <person name="Reichard U."/>
            <person name="Renauld H."/>
            <person name="Robson G.D."/>
            <person name="Rodriguez de Cordoba S."/>
            <person name="Rodriguez-Pena J.M."/>
            <person name="Ronning C.M."/>
            <person name="Rutter S."/>
            <person name="Salzberg S.L."/>
            <person name="Sanchez M."/>
            <person name="Sanchez-Ferrero J.C."/>
            <person name="Saunders D."/>
            <person name="Seeger K."/>
            <person name="Squares R."/>
            <person name="Squares S."/>
            <person name="Takeuchi M."/>
            <person name="Tekaia F."/>
            <person name="Turner G."/>
            <person name="Vazquez de Aldana C.R."/>
            <person name="Weidman J."/>
            <person name="White O."/>
            <person name="Woodward J.R."/>
            <person name="Yu J.-H."/>
            <person name="Fraser C.M."/>
            <person name="Galagan J.E."/>
            <person name="Asai K."/>
            <person name="Machida M."/>
            <person name="Hall N."/>
            <person name="Barrell B.G."/>
            <person name="Denning D.W."/>
        </authorList>
    </citation>
    <scope>NUCLEOTIDE SEQUENCE [LARGE SCALE GENOMIC DNA]</scope>
    <source>
        <strain>ATCC MYA-4609 / CBS 101355 / FGSC A1100 / Af293</strain>
    </source>
</reference>
<reference key="2">
    <citation type="journal article" date="2020" name="Nat. Commun.">
        <title>The negative cofactor 2 complex is a key regulator of drug resistance in Aspergillus fumigatus.</title>
        <authorList>
            <person name="Furukawa T."/>
            <person name="van Rhijn N."/>
            <person name="Fraczek M."/>
            <person name="Gsaller F."/>
            <person name="Davies E."/>
            <person name="Carr P."/>
            <person name="Gago S."/>
            <person name="Fortune-Grant R."/>
            <person name="Rahman S."/>
            <person name="Gilsenan J.M."/>
            <person name="Houlder E."/>
            <person name="Kowalski C.H."/>
            <person name="Raj S."/>
            <person name="Paul S."/>
            <person name="Cook P."/>
            <person name="Parker J.E."/>
            <person name="Kelly S."/>
            <person name="Cramer R.A."/>
            <person name="Latge J.P."/>
            <person name="Moye-Rowley S."/>
            <person name="Bignell E."/>
            <person name="Bowyer P."/>
            <person name="Bromley M.J."/>
        </authorList>
    </citation>
    <scope>FUNCTION</scope>
    <scope>DISRUPTION PHENOTYPE</scope>
    <scope>INTERACTION WITH NCTA AND MOT1</scope>
</reference>
<keyword id="KW-0238">DNA-binding</keyword>
<keyword id="KW-0539">Nucleus</keyword>
<keyword id="KW-1185">Reference proteome</keyword>
<keyword id="KW-0804">Transcription</keyword>
<keyword id="KW-0805">Transcription regulation</keyword>
<protein>
    <recommendedName>
        <fullName evidence="2">NCT transcriptional regulatory complex subunit B</fullName>
    </recommendedName>
    <alternativeName>
        <fullName evidence="2">Negative cofactor 2 B</fullName>
    </alternativeName>
</protein>
<comment type="function">
    <text evidence="1">Part of the NCT transcriptional regulatory complex that acts as a key regulator of ergosterol biosynthesis and the azole exporter cdr1B (PubMed:31969561). The NCT complex binds the promoters of genes linked to azole susceptibility, and especially represses the expression of cdr1B transporter (PubMed:31969561).</text>
</comment>
<comment type="subunit">
    <text evidence="1">Forms the NCT transcriptional regulatory complex with nctA and mot1.</text>
</comment>
<comment type="subcellular location">
    <subcellularLocation>
        <location evidence="4">Nucleus</location>
    </subcellularLocation>
</comment>
<comment type="disruption phenotype">
    <text evidence="1">Leads to a multidrug-resistance phenotype, including the azoles (itraconazole, voriconazole and posaconazole), as well as the salvage therapeutic amphotericin B and terbinafine, an agent used in the treatment of chronic and allergic disease (PubMed:31969561). Also leads to transcriptional derepression of cdr1B and its over-production (PubMed:31969561). Also results in a notable increase in the immunogenic properties of Aspergillus fumigatus, but does not result in loss of virulence (PubMed:31969561).</text>
</comment>
<comment type="similarity">
    <text evidence="3">Belongs to the NC2 beta/DR1 family.</text>
</comment>
<sequence length="142" mass="16096">MSDREFSSNDDLSLPKATVQKIITEILPPSSGQTFSKDARDLLMECCVEFITLISSEANDISEKEAKKTIACEHVERALRDLGFGDYIPEVLAVAEEHKEQLKSREKKQSKMEQSGLTEEELLRQQQELFRSATEKYNAAPE</sequence>
<evidence type="ECO:0000269" key="1">
    <source>
    </source>
</evidence>
<evidence type="ECO:0000303" key="2">
    <source>
    </source>
</evidence>
<evidence type="ECO:0000305" key="3"/>
<evidence type="ECO:0000305" key="4">
    <source>
    </source>
</evidence>
<accession>Q4WFF8</accession>
<dbReference type="EMBL" id="AAHF01000010">
    <property type="protein sequence ID" value="EAL86519.2"/>
    <property type="molecule type" value="Genomic_DNA"/>
</dbReference>
<dbReference type="RefSeq" id="XP_748557.2">
    <property type="nucleotide sequence ID" value="XM_743464.2"/>
</dbReference>
<dbReference type="SMR" id="Q4WFF8"/>
<dbReference type="FunCoup" id="Q4WFF8">
    <property type="interactions" value="853"/>
</dbReference>
<dbReference type="STRING" id="330879.Q4WFF8"/>
<dbReference type="EnsemblFungi" id="EAL86519">
    <property type="protein sequence ID" value="EAL86519"/>
    <property type="gene ID" value="AFUA_3G02340"/>
</dbReference>
<dbReference type="GeneID" id="3505855"/>
<dbReference type="KEGG" id="afm:AFUA_3G02340"/>
<dbReference type="VEuPathDB" id="FungiDB:Afu3g02340"/>
<dbReference type="eggNOG" id="KOG0871">
    <property type="taxonomic scope" value="Eukaryota"/>
</dbReference>
<dbReference type="HOGENOM" id="CLU_066247_11_3_1"/>
<dbReference type="InParanoid" id="Q4WFF8"/>
<dbReference type="OMA" id="RDAKFKK"/>
<dbReference type="OrthoDB" id="601405at2759"/>
<dbReference type="Proteomes" id="UP000002530">
    <property type="component" value="Chromosome 3"/>
</dbReference>
<dbReference type="GO" id="GO:0017054">
    <property type="term" value="C:negative cofactor 2 complex"/>
    <property type="evidence" value="ECO:0000318"/>
    <property type="project" value="GO_Central"/>
</dbReference>
<dbReference type="GO" id="GO:0003682">
    <property type="term" value="F:chromatin binding"/>
    <property type="evidence" value="ECO:0007669"/>
    <property type="project" value="EnsemblFungi"/>
</dbReference>
<dbReference type="GO" id="GO:0001046">
    <property type="term" value="F:core promoter sequence-specific DNA binding"/>
    <property type="evidence" value="ECO:0007669"/>
    <property type="project" value="EnsemblFungi"/>
</dbReference>
<dbReference type="GO" id="GO:0046982">
    <property type="term" value="F:protein heterodimerization activity"/>
    <property type="evidence" value="ECO:0007669"/>
    <property type="project" value="InterPro"/>
</dbReference>
<dbReference type="GO" id="GO:0016251">
    <property type="term" value="F:RNA polymerase II general transcription initiation factor activity"/>
    <property type="evidence" value="ECO:0000318"/>
    <property type="project" value="GO_Central"/>
</dbReference>
<dbReference type="GO" id="GO:0017025">
    <property type="term" value="F:TBP-class protein binding"/>
    <property type="evidence" value="ECO:0000318"/>
    <property type="project" value="GO_Central"/>
</dbReference>
<dbReference type="GO" id="GO:0003713">
    <property type="term" value="F:transcription coactivator activity"/>
    <property type="evidence" value="ECO:0007669"/>
    <property type="project" value="EnsemblFungi"/>
</dbReference>
<dbReference type="GO" id="GO:0003714">
    <property type="term" value="F:transcription corepressor activity"/>
    <property type="evidence" value="ECO:0007669"/>
    <property type="project" value="EnsemblFungi"/>
</dbReference>
<dbReference type="GO" id="GO:0034605">
    <property type="term" value="P:cellular response to heat"/>
    <property type="evidence" value="ECO:0007669"/>
    <property type="project" value="EnsemblFungi"/>
</dbReference>
<dbReference type="GO" id="GO:0017055">
    <property type="term" value="P:negative regulation of RNA polymerase II transcription preinitiation complex assembly"/>
    <property type="evidence" value="ECO:0007669"/>
    <property type="project" value="EnsemblFungi"/>
</dbReference>
<dbReference type="GO" id="GO:0016480">
    <property type="term" value="P:negative regulation of transcription by RNA polymerase III"/>
    <property type="evidence" value="ECO:0007669"/>
    <property type="project" value="EnsemblFungi"/>
</dbReference>
<dbReference type="GO" id="GO:0045944">
    <property type="term" value="P:positive regulation of transcription by RNA polymerase II"/>
    <property type="evidence" value="ECO:0007669"/>
    <property type="project" value="EnsemblFungi"/>
</dbReference>
<dbReference type="GO" id="GO:0051123">
    <property type="term" value="P:RNA polymerase II preinitiation complex assembly"/>
    <property type="evidence" value="ECO:0000318"/>
    <property type="project" value="GO_Central"/>
</dbReference>
<dbReference type="CDD" id="cd22905">
    <property type="entry name" value="HFD_Dr1"/>
    <property type="match status" value="1"/>
</dbReference>
<dbReference type="FunFam" id="1.10.20.10:FF:000019">
    <property type="entry name" value="Negative cofactor 2 beta"/>
    <property type="match status" value="1"/>
</dbReference>
<dbReference type="Gene3D" id="1.10.20.10">
    <property type="entry name" value="Histone, subunit A"/>
    <property type="match status" value="1"/>
</dbReference>
<dbReference type="InterPro" id="IPR003958">
    <property type="entry name" value="CBFA_NFYB_domain"/>
</dbReference>
<dbReference type="InterPro" id="IPR009072">
    <property type="entry name" value="Histone-fold"/>
</dbReference>
<dbReference type="InterPro" id="IPR042225">
    <property type="entry name" value="Ncb2"/>
</dbReference>
<dbReference type="PANTHER" id="PTHR46138">
    <property type="entry name" value="PROTEIN DR1"/>
    <property type="match status" value="1"/>
</dbReference>
<dbReference type="PANTHER" id="PTHR46138:SF1">
    <property type="entry name" value="PROTEIN DR1"/>
    <property type="match status" value="1"/>
</dbReference>
<dbReference type="Pfam" id="PF00808">
    <property type="entry name" value="CBFD_NFYB_HMF"/>
    <property type="match status" value="1"/>
</dbReference>
<dbReference type="SUPFAM" id="SSF47113">
    <property type="entry name" value="Histone-fold"/>
    <property type="match status" value="1"/>
</dbReference>
<gene>
    <name evidence="2" type="primary">nctB</name>
    <name type="ORF">AFUA_3G02340</name>
</gene>
<feature type="chain" id="PRO_0000449614" description="NCT transcriptional regulatory complex subunit B">
    <location>
        <begin position="1"/>
        <end position="142"/>
    </location>
</feature>